<name>PIMT_SALCH</name>
<gene>
    <name evidence="1" type="primary">pcm</name>
    <name type="ordered locus">SCH_2858</name>
</gene>
<comment type="function">
    <text evidence="1">Catalyzes the methyl esterification of L-isoaspartyl residues in peptides and proteins that result from spontaneous decomposition of normal L-aspartyl and L-asparaginyl residues. It plays a role in the repair and/or degradation of damaged proteins.</text>
</comment>
<comment type="catalytic activity">
    <reaction evidence="1">
        <text>[protein]-L-isoaspartate + S-adenosyl-L-methionine = [protein]-L-isoaspartate alpha-methyl ester + S-adenosyl-L-homocysteine</text>
        <dbReference type="Rhea" id="RHEA:12705"/>
        <dbReference type="Rhea" id="RHEA-COMP:12143"/>
        <dbReference type="Rhea" id="RHEA-COMP:12144"/>
        <dbReference type="ChEBI" id="CHEBI:57856"/>
        <dbReference type="ChEBI" id="CHEBI:59789"/>
        <dbReference type="ChEBI" id="CHEBI:90596"/>
        <dbReference type="ChEBI" id="CHEBI:90598"/>
        <dbReference type="EC" id="2.1.1.77"/>
    </reaction>
</comment>
<comment type="subcellular location">
    <subcellularLocation>
        <location evidence="1">Cytoplasm</location>
    </subcellularLocation>
</comment>
<comment type="similarity">
    <text evidence="1">Belongs to the methyltransferase superfamily. L-isoaspartyl/D-aspartyl protein methyltransferase family.</text>
</comment>
<accession>Q57KJ8</accession>
<reference key="1">
    <citation type="journal article" date="2005" name="Nucleic Acids Res.">
        <title>The genome sequence of Salmonella enterica serovar Choleraesuis, a highly invasive and resistant zoonotic pathogen.</title>
        <authorList>
            <person name="Chiu C.-H."/>
            <person name="Tang P."/>
            <person name="Chu C."/>
            <person name="Hu S."/>
            <person name="Bao Q."/>
            <person name="Yu J."/>
            <person name="Chou Y.-Y."/>
            <person name="Wang H.-S."/>
            <person name="Lee Y.-S."/>
        </authorList>
    </citation>
    <scope>NUCLEOTIDE SEQUENCE [LARGE SCALE GENOMIC DNA]</scope>
    <source>
        <strain>SC-B67</strain>
    </source>
</reference>
<proteinExistence type="inferred from homology"/>
<keyword id="KW-0963">Cytoplasm</keyword>
<keyword id="KW-0489">Methyltransferase</keyword>
<keyword id="KW-0949">S-adenosyl-L-methionine</keyword>
<keyword id="KW-0808">Transferase</keyword>
<evidence type="ECO:0000255" key="1">
    <source>
        <dbReference type="HAMAP-Rule" id="MF_00090"/>
    </source>
</evidence>
<dbReference type="EC" id="2.1.1.77" evidence="1"/>
<dbReference type="EMBL" id="AE017220">
    <property type="protein sequence ID" value="AAX66764.1"/>
    <property type="molecule type" value="Genomic_DNA"/>
</dbReference>
<dbReference type="RefSeq" id="WP_000253545.1">
    <property type="nucleotide sequence ID" value="NC_006905.1"/>
</dbReference>
<dbReference type="SMR" id="Q57KJ8"/>
<dbReference type="KEGG" id="sec:SCH_2858"/>
<dbReference type="HOGENOM" id="CLU_055432_2_0_6"/>
<dbReference type="Proteomes" id="UP000000538">
    <property type="component" value="Chromosome"/>
</dbReference>
<dbReference type="GO" id="GO:0005737">
    <property type="term" value="C:cytoplasm"/>
    <property type="evidence" value="ECO:0007669"/>
    <property type="project" value="UniProtKB-SubCell"/>
</dbReference>
<dbReference type="GO" id="GO:0004719">
    <property type="term" value="F:protein-L-isoaspartate (D-aspartate) O-methyltransferase activity"/>
    <property type="evidence" value="ECO:0007669"/>
    <property type="project" value="UniProtKB-UniRule"/>
</dbReference>
<dbReference type="GO" id="GO:0032259">
    <property type="term" value="P:methylation"/>
    <property type="evidence" value="ECO:0007669"/>
    <property type="project" value="UniProtKB-KW"/>
</dbReference>
<dbReference type="GO" id="GO:0036211">
    <property type="term" value="P:protein modification process"/>
    <property type="evidence" value="ECO:0007669"/>
    <property type="project" value="UniProtKB-UniRule"/>
</dbReference>
<dbReference type="GO" id="GO:0030091">
    <property type="term" value="P:protein repair"/>
    <property type="evidence" value="ECO:0007669"/>
    <property type="project" value="UniProtKB-UniRule"/>
</dbReference>
<dbReference type="CDD" id="cd02440">
    <property type="entry name" value="AdoMet_MTases"/>
    <property type="match status" value="1"/>
</dbReference>
<dbReference type="FunFam" id="3.40.50.150:FF:000010">
    <property type="entry name" value="Protein-L-isoaspartate O-methyltransferase"/>
    <property type="match status" value="1"/>
</dbReference>
<dbReference type="Gene3D" id="3.40.50.150">
    <property type="entry name" value="Vaccinia Virus protein VP39"/>
    <property type="match status" value="1"/>
</dbReference>
<dbReference type="HAMAP" id="MF_00090">
    <property type="entry name" value="PIMT"/>
    <property type="match status" value="1"/>
</dbReference>
<dbReference type="InterPro" id="IPR000682">
    <property type="entry name" value="PCMT"/>
</dbReference>
<dbReference type="InterPro" id="IPR029063">
    <property type="entry name" value="SAM-dependent_MTases_sf"/>
</dbReference>
<dbReference type="NCBIfam" id="TIGR00080">
    <property type="entry name" value="pimt"/>
    <property type="match status" value="1"/>
</dbReference>
<dbReference type="NCBIfam" id="NF001453">
    <property type="entry name" value="PRK00312.1"/>
    <property type="match status" value="1"/>
</dbReference>
<dbReference type="PANTHER" id="PTHR11579">
    <property type="entry name" value="PROTEIN-L-ISOASPARTATE O-METHYLTRANSFERASE"/>
    <property type="match status" value="1"/>
</dbReference>
<dbReference type="PANTHER" id="PTHR11579:SF0">
    <property type="entry name" value="PROTEIN-L-ISOASPARTATE(D-ASPARTATE) O-METHYLTRANSFERASE"/>
    <property type="match status" value="1"/>
</dbReference>
<dbReference type="Pfam" id="PF01135">
    <property type="entry name" value="PCMT"/>
    <property type="match status" value="1"/>
</dbReference>
<dbReference type="SUPFAM" id="SSF53335">
    <property type="entry name" value="S-adenosyl-L-methionine-dependent methyltransferases"/>
    <property type="match status" value="1"/>
</dbReference>
<dbReference type="PROSITE" id="PS01279">
    <property type="entry name" value="PCMT"/>
    <property type="match status" value="1"/>
</dbReference>
<feature type="chain" id="PRO_1000004823" description="Protein-L-isoaspartate O-methyltransferase">
    <location>
        <begin position="1"/>
        <end position="208"/>
    </location>
</feature>
<feature type="active site" evidence="1">
    <location>
        <position position="59"/>
    </location>
</feature>
<organism>
    <name type="scientific">Salmonella choleraesuis (strain SC-B67)</name>
    <dbReference type="NCBI Taxonomy" id="321314"/>
    <lineage>
        <taxon>Bacteria</taxon>
        <taxon>Pseudomonadati</taxon>
        <taxon>Pseudomonadota</taxon>
        <taxon>Gammaproteobacteria</taxon>
        <taxon>Enterobacterales</taxon>
        <taxon>Enterobacteriaceae</taxon>
        <taxon>Salmonella</taxon>
    </lineage>
</organism>
<protein>
    <recommendedName>
        <fullName evidence="1">Protein-L-isoaspartate O-methyltransferase</fullName>
        <ecNumber evidence="1">2.1.1.77</ecNumber>
    </recommendedName>
    <alternativeName>
        <fullName evidence="1">L-isoaspartyl protein carboxyl methyltransferase</fullName>
    </alternativeName>
    <alternativeName>
        <fullName evidence="1">Protein L-isoaspartyl methyltransferase</fullName>
    </alternativeName>
    <alternativeName>
        <fullName evidence="1">Protein-beta-aspartate methyltransferase</fullName>
        <shortName evidence="1">PIMT</shortName>
    </alternativeName>
</protein>
<sequence>MVSGRVQALLEQLRAQGIRDEQVLNALAAVPREKFIDEAFEHKAWENIALPIGQGQTISQPYMVARMTELLELTPQSRVLEIGTGSGYQTAILAHLVHHVCSVERIKGLQWQARRRLKQLDLHNVSTRHGDGWQGWQARAPFDAIIVTAAPPEIPTALMAQLDEGGILVLPVGDEQQFLKRVRRRGGEFIIDTVEAVRFVPLVKGELA</sequence>